<protein>
    <recommendedName>
        <fullName evidence="1">Nucleoid-associated protein Cpar_0834</fullName>
    </recommendedName>
</protein>
<proteinExistence type="inferred from homology"/>
<reference key="1">
    <citation type="submission" date="2008-06" db="EMBL/GenBank/DDBJ databases">
        <title>Complete sequence of Chlorobaculum parvum NCIB 8327.</title>
        <authorList>
            <consortium name="US DOE Joint Genome Institute"/>
            <person name="Lucas S."/>
            <person name="Copeland A."/>
            <person name="Lapidus A."/>
            <person name="Glavina del Rio T."/>
            <person name="Dalin E."/>
            <person name="Tice H."/>
            <person name="Bruce D."/>
            <person name="Goodwin L."/>
            <person name="Pitluck S."/>
            <person name="Schmutz J."/>
            <person name="Larimer F."/>
            <person name="Land M."/>
            <person name="Hauser L."/>
            <person name="Kyrpides N."/>
            <person name="Mikhailova N."/>
            <person name="Zhao F."/>
            <person name="Li T."/>
            <person name="Liu Z."/>
            <person name="Overmann J."/>
            <person name="Bryant D.A."/>
            <person name="Richardson P."/>
        </authorList>
    </citation>
    <scope>NUCLEOTIDE SEQUENCE [LARGE SCALE GENOMIC DNA]</scope>
    <source>
        <strain>DSM 263 / NCIMB 8327</strain>
    </source>
</reference>
<comment type="function">
    <text evidence="1">Binds to DNA and alters its conformation. May be involved in regulation of gene expression, nucleoid organization and DNA protection.</text>
</comment>
<comment type="subunit">
    <text evidence="1">Homodimer.</text>
</comment>
<comment type="subcellular location">
    <subcellularLocation>
        <location evidence="1">Cytoplasm</location>
        <location evidence="1">Nucleoid</location>
    </subcellularLocation>
</comment>
<comment type="similarity">
    <text evidence="1">Belongs to the YbaB/EbfC family.</text>
</comment>
<gene>
    <name type="ordered locus">Cpar_0834</name>
</gene>
<accession>B3QMU7</accession>
<sequence>MAMPNFGDMMKQLQEAGAKMQDVQKQLEKLVSEGEAGGGMVKAKVNGRQKLLELSIDPEIMDDVDMVQDLVVAAVNKALDASAQLAQNEIQKAAGGMINPADLLKQFGGQG</sequence>
<keyword id="KW-0963">Cytoplasm</keyword>
<keyword id="KW-0238">DNA-binding</keyword>
<evidence type="ECO:0000255" key="1">
    <source>
        <dbReference type="HAMAP-Rule" id="MF_00274"/>
    </source>
</evidence>
<feature type="chain" id="PRO_1000114596" description="Nucleoid-associated protein Cpar_0834">
    <location>
        <begin position="1"/>
        <end position="111"/>
    </location>
</feature>
<name>Y834_CHLP8</name>
<dbReference type="EMBL" id="CP001099">
    <property type="protein sequence ID" value="ACF11250.1"/>
    <property type="molecule type" value="Genomic_DNA"/>
</dbReference>
<dbReference type="RefSeq" id="WP_012502083.1">
    <property type="nucleotide sequence ID" value="NC_011027.1"/>
</dbReference>
<dbReference type="SMR" id="B3QMU7"/>
<dbReference type="STRING" id="517417.Cpar_0834"/>
<dbReference type="KEGG" id="cpc:Cpar_0834"/>
<dbReference type="eggNOG" id="COG0718">
    <property type="taxonomic scope" value="Bacteria"/>
</dbReference>
<dbReference type="HOGENOM" id="CLU_140930_0_1_10"/>
<dbReference type="OrthoDB" id="9808738at2"/>
<dbReference type="Proteomes" id="UP000008811">
    <property type="component" value="Chromosome"/>
</dbReference>
<dbReference type="GO" id="GO:0043590">
    <property type="term" value="C:bacterial nucleoid"/>
    <property type="evidence" value="ECO:0007669"/>
    <property type="project" value="UniProtKB-UniRule"/>
</dbReference>
<dbReference type="GO" id="GO:0005829">
    <property type="term" value="C:cytosol"/>
    <property type="evidence" value="ECO:0007669"/>
    <property type="project" value="TreeGrafter"/>
</dbReference>
<dbReference type="GO" id="GO:0003677">
    <property type="term" value="F:DNA binding"/>
    <property type="evidence" value="ECO:0007669"/>
    <property type="project" value="UniProtKB-UniRule"/>
</dbReference>
<dbReference type="Gene3D" id="3.30.1310.10">
    <property type="entry name" value="Nucleoid-associated protein YbaB-like domain"/>
    <property type="match status" value="1"/>
</dbReference>
<dbReference type="HAMAP" id="MF_00274">
    <property type="entry name" value="DNA_YbaB_EbfC"/>
    <property type="match status" value="1"/>
</dbReference>
<dbReference type="InterPro" id="IPR036894">
    <property type="entry name" value="YbaB-like_sf"/>
</dbReference>
<dbReference type="InterPro" id="IPR004401">
    <property type="entry name" value="YbaB/EbfC"/>
</dbReference>
<dbReference type="NCBIfam" id="TIGR00103">
    <property type="entry name" value="DNA_YbaB_EbfC"/>
    <property type="match status" value="1"/>
</dbReference>
<dbReference type="PANTHER" id="PTHR33449">
    <property type="entry name" value="NUCLEOID-ASSOCIATED PROTEIN YBAB"/>
    <property type="match status" value="1"/>
</dbReference>
<dbReference type="PANTHER" id="PTHR33449:SF1">
    <property type="entry name" value="NUCLEOID-ASSOCIATED PROTEIN YBAB"/>
    <property type="match status" value="1"/>
</dbReference>
<dbReference type="Pfam" id="PF02575">
    <property type="entry name" value="YbaB_DNA_bd"/>
    <property type="match status" value="1"/>
</dbReference>
<dbReference type="PIRSF" id="PIRSF004555">
    <property type="entry name" value="UCP004555"/>
    <property type="match status" value="1"/>
</dbReference>
<dbReference type="SUPFAM" id="SSF82607">
    <property type="entry name" value="YbaB-like"/>
    <property type="match status" value="1"/>
</dbReference>
<organism>
    <name type="scientific">Chlorobaculum parvum (strain DSM 263 / NCIMB 8327)</name>
    <name type="common">Chlorobium vibrioforme subsp. thiosulfatophilum</name>
    <dbReference type="NCBI Taxonomy" id="517417"/>
    <lineage>
        <taxon>Bacteria</taxon>
        <taxon>Pseudomonadati</taxon>
        <taxon>Chlorobiota</taxon>
        <taxon>Chlorobiia</taxon>
        <taxon>Chlorobiales</taxon>
        <taxon>Chlorobiaceae</taxon>
        <taxon>Chlorobaculum</taxon>
    </lineage>
</organism>